<organism>
    <name type="scientific">Lawsonia intracellularis (strain PHE/MN1-00)</name>
    <dbReference type="NCBI Taxonomy" id="363253"/>
    <lineage>
        <taxon>Bacteria</taxon>
        <taxon>Pseudomonadati</taxon>
        <taxon>Thermodesulfobacteriota</taxon>
        <taxon>Desulfovibrionia</taxon>
        <taxon>Desulfovibrionales</taxon>
        <taxon>Desulfovibrionaceae</taxon>
        <taxon>Lawsonia</taxon>
    </lineage>
</organism>
<accession>Q1MR76</accession>
<proteinExistence type="inferred from homology"/>
<dbReference type="EC" id="2.7.7.60" evidence="1"/>
<dbReference type="EC" id="4.6.1.12" evidence="1"/>
<dbReference type="EMBL" id="AM180252">
    <property type="protein sequence ID" value="CAJ54500.1"/>
    <property type="molecule type" value="Genomic_DNA"/>
</dbReference>
<dbReference type="RefSeq" id="WP_011526530.1">
    <property type="nucleotide sequence ID" value="NC_008011.1"/>
</dbReference>
<dbReference type="SMR" id="Q1MR76"/>
<dbReference type="STRING" id="363253.LI0446"/>
<dbReference type="KEGG" id="lip:LI0446"/>
<dbReference type="eggNOG" id="COG0245">
    <property type="taxonomic scope" value="Bacteria"/>
</dbReference>
<dbReference type="eggNOG" id="COG1211">
    <property type="taxonomic scope" value="Bacteria"/>
</dbReference>
<dbReference type="HOGENOM" id="CLU_042800_2_6_7"/>
<dbReference type="OrthoDB" id="9804336at2"/>
<dbReference type="UniPathway" id="UPA00056">
    <property type="reaction ID" value="UER00093"/>
</dbReference>
<dbReference type="UniPathway" id="UPA00056">
    <property type="reaction ID" value="UER00095"/>
</dbReference>
<dbReference type="Proteomes" id="UP000002430">
    <property type="component" value="Chromosome"/>
</dbReference>
<dbReference type="GO" id="GO:0008685">
    <property type="term" value="F:2-C-methyl-D-erythritol 2,4-cyclodiphosphate synthase activity"/>
    <property type="evidence" value="ECO:0007669"/>
    <property type="project" value="UniProtKB-UniRule"/>
</dbReference>
<dbReference type="GO" id="GO:0050518">
    <property type="term" value="F:2-C-methyl-D-erythritol 4-phosphate cytidylyltransferase activity"/>
    <property type="evidence" value="ECO:0007669"/>
    <property type="project" value="UniProtKB-UniRule"/>
</dbReference>
<dbReference type="GO" id="GO:0046872">
    <property type="term" value="F:metal ion binding"/>
    <property type="evidence" value="ECO:0007669"/>
    <property type="project" value="UniProtKB-KW"/>
</dbReference>
<dbReference type="GO" id="GO:0019288">
    <property type="term" value="P:isopentenyl diphosphate biosynthetic process, methylerythritol 4-phosphate pathway"/>
    <property type="evidence" value="ECO:0007669"/>
    <property type="project" value="UniProtKB-UniRule"/>
</dbReference>
<dbReference type="GO" id="GO:0016114">
    <property type="term" value="P:terpenoid biosynthetic process"/>
    <property type="evidence" value="ECO:0007669"/>
    <property type="project" value="InterPro"/>
</dbReference>
<dbReference type="CDD" id="cd02516">
    <property type="entry name" value="CDP-ME_synthetase"/>
    <property type="match status" value="1"/>
</dbReference>
<dbReference type="CDD" id="cd00554">
    <property type="entry name" value="MECDP_synthase"/>
    <property type="match status" value="1"/>
</dbReference>
<dbReference type="FunFam" id="3.90.550.10:FF:000003">
    <property type="entry name" value="2-C-methyl-D-erythritol 4-phosphate cytidylyltransferase"/>
    <property type="match status" value="1"/>
</dbReference>
<dbReference type="Gene3D" id="3.30.1330.50">
    <property type="entry name" value="2-C-methyl-D-erythritol 2,4-cyclodiphosphate synthase"/>
    <property type="match status" value="1"/>
</dbReference>
<dbReference type="Gene3D" id="3.90.550.10">
    <property type="entry name" value="Spore Coat Polysaccharide Biosynthesis Protein SpsA, Chain A"/>
    <property type="match status" value="1"/>
</dbReference>
<dbReference type="HAMAP" id="MF_01520">
    <property type="entry name" value="IspDF"/>
    <property type="match status" value="1"/>
</dbReference>
<dbReference type="HAMAP" id="MF_00107">
    <property type="entry name" value="IspF"/>
    <property type="match status" value="1"/>
</dbReference>
<dbReference type="InterPro" id="IPR001228">
    <property type="entry name" value="IspD"/>
</dbReference>
<dbReference type="InterPro" id="IPR026596">
    <property type="entry name" value="IspD/F"/>
</dbReference>
<dbReference type="InterPro" id="IPR034683">
    <property type="entry name" value="IspD/TarI"/>
</dbReference>
<dbReference type="InterPro" id="IPR018294">
    <property type="entry name" value="ISPD_synthase_CS"/>
</dbReference>
<dbReference type="InterPro" id="IPR003526">
    <property type="entry name" value="MECDP_synthase"/>
</dbReference>
<dbReference type="InterPro" id="IPR020555">
    <property type="entry name" value="MECDP_synthase_CS"/>
</dbReference>
<dbReference type="InterPro" id="IPR036571">
    <property type="entry name" value="MECDP_synthase_sf"/>
</dbReference>
<dbReference type="InterPro" id="IPR029044">
    <property type="entry name" value="Nucleotide-diphossugar_trans"/>
</dbReference>
<dbReference type="NCBIfam" id="TIGR00453">
    <property type="entry name" value="ispD"/>
    <property type="match status" value="1"/>
</dbReference>
<dbReference type="NCBIfam" id="TIGR00151">
    <property type="entry name" value="ispF"/>
    <property type="match status" value="1"/>
</dbReference>
<dbReference type="PANTHER" id="PTHR43181">
    <property type="entry name" value="2-C-METHYL-D-ERYTHRITOL 2,4-CYCLODIPHOSPHATE SYNTHASE, CHLOROPLASTIC"/>
    <property type="match status" value="1"/>
</dbReference>
<dbReference type="PANTHER" id="PTHR43181:SF1">
    <property type="entry name" value="2-C-METHYL-D-ERYTHRITOL 2,4-CYCLODIPHOSPHATE SYNTHASE, CHLOROPLASTIC"/>
    <property type="match status" value="1"/>
</dbReference>
<dbReference type="Pfam" id="PF01128">
    <property type="entry name" value="IspD"/>
    <property type="match status" value="1"/>
</dbReference>
<dbReference type="Pfam" id="PF02542">
    <property type="entry name" value="YgbB"/>
    <property type="match status" value="1"/>
</dbReference>
<dbReference type="SUPFAM" id="SSF69765">
    <property type="entry name" value="IpsF-like"/>
    <property type="match status" value="1"/>
</dbReference>
<dbReference type="SUPFAM" id="SSF53448">
    <property type="entry name" value="Nucleotide-diphospho-sugar transferases"/>
    <property type="match status" value="1"/>
</dbReference>
<dbReference type="PROSITE" id="PS01295">
    <property type="entry name" value="ISPD"/>
    <property type="match status" value="1"/>
</dbReference>
<dbReference type="PROSITE" id="PS01350">
    <property type="entry name" value="ISPF"/>
    <property type="match status" value="1"/>
</dbReference>
<evidence type="ECO:0000255" key="1">
    <source>
        <dbReference type="HAMAP-Rule" id="MF_01520"/>
    </source>
</evidence>
<keyword id="KW-0414">Isoprene biosynthesis</keyword>
<keyword id="KW-0456">Lyase</keyword>
<keyword id="KW-0479">Metal-binding</keyword>
<keyword id="KW-0511">Multifunctional enzyme</keyword>
<keyword id="KW-0548">Nucleotidyltransferase</keyword>
<keyword id="KW-1185">Reference proteome</keyword>
<keyword id="KW-0808">Transferase</keyword>
<protein>
    <recommendedName>
        <fullName evidence="1">Bifunctional enzyme IspD/IspF</fullName>
    </recommendedName>
    <domain>
        <recommendedName>
            <fullName evidence="1">2-C-methyl-D-erythritol 4-phosphate cytidylyltransferase</fullName>
            <ecNumber evidence="1">2.7.7.60</ecNumber>
        </recommendedName>
        <alternativeName>
            <fullName evidence="1">4-diphosphocytidyl-2C-methyl-D-erythritol synthase</fullName>
        </alternativeName>
        <alternativeName>
            <fullName evidence="1">MEP cytidylyltransferase</fullName>
            <shortName evidence="1">MCT</shortName>
        </alternativeName>
    </domain>
    <domain>
        <recommendedName>
            <fullName evidence="1">2-C-methyl-D-erythritol 2,4-cyclodiphosphate synthase</fullName>
            <shortName evidence="1">MECDP-synthase</shortName>
            <shortName evidence="1">MECPP-synthase</shortName>
            <shortName evidence="1">MECPS</shortName>
            <ecNumber evidence="1">4.6.1.12</ecNumber>
        </recommendedName>
    </domain>
</protein>
<comment type="function">
    <text evidence="1">Bifunctional enzyme that catalyzes the formation of 4-diphosphocytidyl-2-C-methyl-D-erythritol from CTP and 2-C-methyl-D-erythritol 4-phosphate (MEP) (IspD), and catalyzes the conversion of 4-diphosphocytidyl-2-C-methyl-D-erythritol 2-phosphate (CDP-ME2P) to 2-C-methyl-D-erythritol 2,4-cyclodiphosphate (ME-CPP) with a corresponding release of cytidine 5-monophosphate (CMP) (IspF).</text>
</comment>
<comment type="catalytic activity">
    <reaction evidence="1">
        <text>2-C-methyl-D-erythritol 4-phosphate + CTP + H(+) = 4-CDP-2-C-methyl-D-erythritol + diphosphate</text>
        <dbReference type="Rhea" id="RHEA:13429"/>
        <dbReference type="ChEBI" id="CHEBI:15378"/>
        <dbReference type="ChEBI" id="CHEBI:33019"/>
        <dbReference type="ChEBI" id="CHEBI:37563"/>
        <dbReference type="ChEBI" id="CHEBI:57823"/>
        <dbReference type="ChEBI" id="CHEBI:58262"/>
        <dbReference type="EC" id="2.7.7.60"/>
    </reaction>
</comment>
<comment type="catalytic activity">
    <reaction evidence="1">
        <text>4-CDP-2-C-methyl-D-erythritol 2-phosphate = 2-C-methyl-D-erythritol 2,4-cyclic diphosphate + CMP</text>
        <dbReference type="Rhea" id="RHEA:23864"/>
        <dbReference type="ChEBI" id="CHEBI:57919"/>
        <dbReference type="ChEBI" id="CHEBI:58483"/>
        <dbReference type="ChEBI" id="CHEBI:60377"/>
        <dbReference type="EC" id="4.6.1.12"/>
    </reaction>
</comment>
<comment type="cofactor">
    <cofactor evidence="1">
        <name>a divalent metal cation</name>
        <dbReference type="ChEBI" id="CHEBI:60240"/>
    </cofactor>
</comment>
<comment type="pathway">
    <text evidence="1">Isoprenoid biosynthesis; isopentenyl diphosphate biosynthesis via DXP pathway; isopentenyl diphosphate from 1-deoxy-D-xylulose 5-phosphate: step 2/6.</text>
</comment>
<comment type="pathway">
    <text evidence="1">Isoprenoid biosynthesis; isopentenyl diphosphate biosynthesis via DXP pathway; isopentenyl diphosphate from 1-deoxy-D-xylulose 5-phosphate: step 4/6.</text>
</comment>
<comment type="similarity">
    <text evidence="1">In the N-terminal section; belongs to the IspD/TarI cytidylyltransferase family. IspD subfamily.</text>
</comment>
<comment type="similarity">
    <text evidence="1">In the C-terminal section; belongs to the IspF family.</text>
</comment>
<reference key="1">
    <citation type="submission" date="2005-11" db="EMBL/GenBank/DDBJ databases">
        <title>The complete genome sequence of Lawsonia intracellularis: the causative agent of proliferative enteropathy.</title>
        <authorList>
            <person name="Kaur K."/>
            <person name="Zhang Q."/>
            <person name="Beckler D."/>
            <person name="Munir S."/>
            <person name="Li L."/>
            <person name="Kinsley K."/>
            <person name="Herron L."/>
            <person name="Peterson A."/>
            <person name="May B."/>
            <person name="Singh S."/>
            <person name="Gebhart C."/>
            <person name="Kapur V."/>
        </authorList>
    </citation>
    <scope>NUCLEOTIDE SEQUENCE [LARGE SCALE GENOMIC DNA]</scope>
    <source>
        <strain>PHE/MN1-00</strain>
    </source>
</reference>
<feature type="chain" id="PRO_0000296748" description="Bifunctional enzyme IspD/IspF">
    <location>
        <begin position="1"/>
        <end position="399"/>
    </location>
</feature>
<feature type="region of interest" description="2-C-methyl-D-erythritol 4-phosphate cytidylyltransferase" evidence="1">
    <location>
        <begin position="1"/>
        <end position="235"/>
    </location>
</feature>
<feature type="region of interest" description="2-C-methyl-D-erythritol 2,4-cyclodiphosphate synthase" evidence="1">
    <location>
        <begin position="236"/>
        <end position="399"/>
    </location>
</feature>
<feature type="binding site" evidence="1">
    <location>
        <begin position="242"/>
        <end position="244"/>
    </location>
    <ligand>
        <name>4-CDP-2-C-methyl-D-erythritol 2-phosphate</name>
        <dbReference type="ChEBI" id="CHEBI:57919"/>
    </ligand>
</feature>
<feature type="binding site" evidence="1">
    <location>
        <position position="242"/>
    </location>
    <ligand>
        <name>a divalent metal cation</name>
        <dbReference type="ChEBI" id="CHEBI:60240"/>
    </ligand>
</feature>
<feature type="binding site" evidence="1">
    <location>
        <position position="244"/>
    </location>
    <ligand>
        <name>a divalent metal cation</name>
        <dbReference type="ChEBI" id="CHEBI:60240"/>
    </ligand>
</feature>
<feature type="binding site" evidence="1">
    <location>
        <begin position="275"/>
        <end position="276"/>
    </location>
    <ligand>
        <name>4-CDP-2-C-methyl-D-erythritol 2-phosphate</name>
        <dbReference type="ChEBI" id="CHEBI:57919"/>
    </ligand>
</feature>
<feature type="binding site" evidence="1">
    <location>
        <position position="283"/>
    </location>
    <ligand>
        <name>a divalent metal cation</name>
        <dbReference type="ChEBI" id="CHEBI:60240"/>
    </ligand>
</feature>
<feature type="binding site" evidence="1">
    <location>
        <begin position="297"/>
        <end position="299"/>
    </location>
    <ligand>
        <name>4-CDP-2-C-methyl-D-erythritol 2-phosphate</name>
        <dbReference type="ChEBI" id="CHEBI:57919"/>
    </ligand>
</feature>
<feature type="binding site" evidence="1">
    <location>
        <begin position="302"/>
        <end position="306"/>
    </location>
    <ligand>
        <name>4-CDP-2-C-methyl-D-erythritol 2-phosphate</name>
        <dbReference type="ChEBI" id="CHEBI:57919"/>
    </ligand>
</feature>
<feature type="binding site" evidence="1">
    <location>
        <begin position="373"/>
        <end position="376"/>
    </location>
    <ligand>
        <name>4-CDP-2-C-methyl-D-erythritol 2-phosphate</name>
        <dbReference type="ChEBI" id="CHEBI:57919"/>
    </ligand>
</feature>
<feature type="binding site" evidence="1">
    <location>
        <position position="380"/>
    </location>
    <ligand>
        <name>4-CDP-2-C-methyl-D-erythritol 2-phosphate</name>
        <dbReference type="ChEBI" id="CHEBI:57919"/>
    </ligand>
</feature>
<feature type="site" description="Transition state stabilizer" evidence="1">
    <location>
        <position position="15"/>
    </location>
</feature>
<feature type="site" description="Transition state stabilizer" evidence="1">
    <location>
        <position position="24"/>
    </location>
</feature>
<feature type="site" description="Positions MEP for the nucleophilic attack" evidence="1">
    <location>
        <position position="160"/>
    </location>
</feature>
<feature type="site" description="Positions MEP for the nucleophilic attack" evidence="1">
    <location>
        <position position="216"/>
    </location>
</feature>
<feature type="site" description="Transition state stabilizer" evidence="1">
    <location>
        <position position="275"/>
    </location>
</feature>
<feature type="site" description="Transition state stabilizer" evidence="1">
    <location>
        <position position="374"/>
    </location>
</feature>
<name>ISPDF_LAWIP</name>
<gene>
    <name evidence="1" type="primary">ispDF</name>
    <name type="ordered locus">LI0446</name>
</gene>
<sequence>METWALILAAGQGSRLLSTIGIAKQFFVWKGIPLYWQSVLQFMHCARIRGVVLVFPSEVKDNEEKVVDRLAAQYDLRLPYIVISGGKLRQDSVKNALNTLPKNCSHVLIHDAARPFISPKLINNVIEVLEAGAVGVVPGISVTDTIKQVIQGEVIVTRPREQLIAVQTPQGFHLKTIVEGHNRATLEKWTVTDDASLLELCGHTVQVINGEIENRKISFPQDLLYMVEQPKTTVPIVGYGYDVHKYVTEDQINQPIRSMRLGGISIPNAPNVVAHSDGDVLLHALMDALLGCIGGGDIGLHFPDSDKRYDGINSAILLDHVLTKVLESSIKIVHMDATIVAQLPKISQYREAIRSNLSRLLDLDLANVNIKATTEEGLGFTGECKGIKAIVIVTAIRIS</sequence>